<protein>
    <recommendedName>
        <fullName>Transcriptional regulator MraZ</fullName>
    </recommendedName>
</protein>
<proteinExistence type="inferred from homology"/>
<accession>A9B519</accession>
<name>MRAZ_HERA2</name>
<comment type="subunit">
    <text evidence="1">Forms oligomers.</text>
</comment>
<comment type="subcellular location">
    <subcellularLocation>
        <location evidence="1">Cytoplasm</location>
        <location evidence="1">Nucleoid</location>
    </subcellularLocation>
</comment>
<comment type="similarity">
    <text evidence="1">Belongs to the MraZ family.</text>
</comment>
<keyword id="KW-0963">Cytoplasm</keyword>
<keyword id="KW-0238">DNA-binding</keyword>
<keyword id="KW-0677">Repeat</keyword>
<keyword id="KW-0804">Transcription</keyword>
<keyword id="KW-0805">Transcription regulation</keyword>
<dbReference type="EMBL" id="CP000875">
    <property type="protein sequence ID" value="ABX06156.1"/>
    <property type="molecule type" value="Genomic_DNA"/>
</dbReference>
<dbReference type="SMR" id="A9B519"/>
<dbReference type="FunCoup" id="A9B519">
    <property type="interactions" value="232"/>
</dbReference>
<dbReference type="STRING" id="316274.Haur_3520"/>
<dbReference type="KEGG" id="hau:Haur_3520"/>
<dbReference type="eggNOG" id="COG2001">
    <property type="taxonomic scope" value="Bacteria"/>
</dbReference>
<dbReference type="HOGENOM" id="CLU_107907_0_5_0"/>
<dbReference type="InParanoid" id="A9B519"/>
<dbReference type="Proteomes" id="UP000000787">
    <property type="component" value="Chromosome"/>
</dbReference>
<dbReference type="GO" id="GO:0005737">
    <property type="term" value="C:cytoplasm"/>
    <property type="evidence" value="ECO:0007669"/>
    <property type="project" value="UniProtKB-UniRule"/>
</dbReference>
<dbReference type="GO" id="GO:0009295">
    <property type="term" value="C:nucleoid"/>
    <property type="evidence" value="ECO:0007669"/>
    <property type="project" value="UniProtKB-SubCell"/>
</dbReference>
<dbReference type="GO" id="GO:0003700">
    <property type="term" value="F:DNA-binding transcription factor activity"/>
    <property type="evidence" value="ECO:0007669"/>
    <property type="project" value="UniProtKB-UniRule"/>
</dbReference>
<dbReference type="GO" id="GO:0000976">
    <property type="term" value="F:transcription cis-regulatory region binding"/>
    <property type="evidence" value="ECO:0007669"/>
    <property type="project" value="TreeGrafter"/>
</dbReference>
<dbReference type="GO" id="GO:2000143">
    <property type="term" value="P:negative regulation of DNA-templated transcription initiation"/>
    <property type="evidence" value="ECO:0007669"/>
    <property type="project" value="TreeGrafter"/>
</dbReference>
<dbReference type="CDD" id="cd16321">
    <property type="entry name" value="MraZ_C"/>
    <property type="match status" value="1"/>
</dbReference>
<dbReference type="CDD" id="cd16320">
    <property type="entry name" value="MraZ_N"/>
    <property type="match status" value="1"/>
</dbReference>
<dbReference type="Gene3D" id="3.40.1550.20">
    <property type="entry name" value="Transcriptional regulator MraZ domain"/>
    <property type="match status" value="1"/>
</dbReference>
<dbReference type="HAMAP" id="MF_01008">
    <property type="entry name" value="MraZ"/>
    <property type="match status" value="1"/>
</dbReference>
<dbReference type="InterPro" id="IPR003444">
    <property type="entry name" value="MraZ"/>
</dbReference>
<dbReference type="InterPro" id="IPR035644">
    <property type="entry name" value="MraZ_C"/>
</dbReference>
<dbReference type="InterPro" id="IPR020603">
    <property type="entry name" value="MraZ_dom"/>
</dbReference>
<dbReference type="InterPro" id="IPR035642">
    <property type="entry name" value="MraZ_N"/>
</dbReference>
<dbReference type="InterPro" id="IPR038619">
    <property type="entry name" value="MraZ_sf"/>
</dbReference>
<dbReference type="InterPro" id="IPR007159">
    <property type="entry name" value="SpoVT-AbrB_dom"/>
</dbReference>
<dbReference type="InterPro" id="IPR037914">
    <property type="entry name" value="SpoVT-AbrB_sf"/>
</dbReference>
<dbReference type="NCBIfam" id="TIGR00242">
    <property type="entry name" value="division/cell wall cluster transcriptional repressor MraZ"/>
    <property type="match status" value="1"/>
</dbReference>
<dbReference type="PANTHER" id="PTHR34701">
    <property type="entry name" value="TRANSCRIPTIONAL REGULATOR MRAZ"/>
    <property type="match status" value="1"/>
</dbReference>
<dbReference type="PANTHER" id="PTHR34701:SF1">
    <property type="entry name" value="TRANSCRIPTIONAL REGULATOR MRAZ"/>
    <property type="match status" value="1"/>
</dbReference>
<dbReference type="Pfam" id="PF02381">
    <property type="entry name" value="MraZ"/>
    <property type="match status" value="2"/>
</dbReference>
<dbReference type="SUPFAM" id="SSF89447">
    <property type="entry name" value="AbrB/MazE/MraZ-like"/>
    <property type="match status" value="1"/>
</dbReference>
<dbReference type="PROSITE" id="PS51740">
    <property type="entry name" value="SPOVT_ABRB"/>
    <property type="match status" value="2"/>
</dbReference>
<organism>
    <name type="scientific">Herpetosiphon aurantiacus (strain ATCC 23779 / DSM 785 / 114-95)</name>
    <dbReference type="NCBI Taxonomy" id="316274"/>
    <lineage>
        <taxon>Bacteria</taxon>
        <taxon>Bacillati</taxon>
        <taxon>Chloroflexota</taxon>
        <taxon>Chloroflexia</taxon>
        <taxon>Herpetosiphonales</taxon>
        <taxon>Herpetosiphonaceae</taxon>
        <taxon>Herpetosiphon</taxon>
    </lineage>
</organism>
<feature type="chain" id="PRO_1000134803" description="Transcriptional regulator MraZ">
    <location>
        <begin position="1"/>
        <end position="143"/>
    </location>
</feature>
<feature type="domain" description="SpoVT-AbrB 1" evidence="2">
    <location>
        <begin position="5"/>
        <end position="47"/>
    </location>
</feature>
<feature type="domain" description="SpoVT-AbrB 2" evidence="2">
    <location>
        <begin position="76"/>
        <end position="119"/>
    </location>
</feature>
<gene>
    <name evidence="1" type="primary">mraZ</name>
    <name type="ordered locus">Haur_3520</name>
</gene>
<sequence>MFLGEYEHTVDEKGRLAIPAKFRAGLAEGLVLTRGFDQNLLLYPMPVWRELAARINALPITQPSARNLRRLMFAGASDLGLDKQGRIVLPPNLRQYATITNQAVVTGMDSFIEIWSAERWQTVLDSFADEAPALAEHVSAFGI</sequence>
<reference key="1">
    <citation type="journal article" date="2011" name="Stand. Genomic Sci.">
        <title>Complete genome sequence of the filamentous gliding predatory bacterium Herpetosiphon aurantiacus type strain (114-95(T)).</title>
        <authorList>
            <person name="Kiss H."/>
            <person name="Nett M."/>
            <person name="Domin N."/>
            <person name="Martin K."/>
            <person name="Maresca J.A."/>
            <person name="Copeland A."/>
            <person name="Lapidus A."/>
            <person name="Lucas S."/>
            <person name="Berry K.W."/>
            <person name="Glavina Del Rio T."/>
            <person name="Dalin E."/>
            <person name="Tice H."/>
            <person name="Pitluck S."/>
            <person name="Richardson P."/>
            <person name="Bruce D."/>
            <person name="Goodwin L."/>
            <person name="Han C."/>
            <person name="Detter J.C."/>
            <person name="Schmutz J."/>
            <person name="Brettin T."/>
            <person name="Land M."/>
            <person name="Hauser L."/>
            <person name="Kyrpides N.C."/>
            <person name="Ivanova N."/>
            <person name="Goeker M."/>
            <person name="Woyke T."/>
            <person name="Klenk H.P."/>
            <person name="Bryant D.A."/>
        </authorList>
    </citation>
    <scope>NUCLEOTIDE SEQUENCE [LARGE SCALE GENOMIC DNA]</scope>
    <source>
        <strain>ATCC 23779 / DSM 785 / 114-95</strain>
    </source>
</reference>
<evidence type="ECO:0000255" key="1">
    <source>
        <dbReference type="HAMAP-Rule" id="MF_01008"/>
    </source>
</evidence>
<evidence type="ECO:0000255" key="2">
    <source>
        <dbReference type="PROSITE-ProRule" id="PRU01076"/>
    </source>
</evidence>